<sequence>MSGPLVLAVPSKGRLQENAEAFFGRAGLNLSKPGGARDYRGTISGLDNVEIAYLSASDIASQLARGTVHLGVTGEDLVREEITDADKRVLLIDTLGFGGANVVVAVPQAWIDVRTMADLDDVASGFRAQHNRRMRVATKYINLTRGFFASHGIVDYRIVESAGATEGAPAVGTAELIVDITSTGSTLVANGLKVLDDGVILRSQANLVASRDADWSEGPRESARIILDHIHARARASKYREVRTRFKGCDAAMLTEAHNRFGVVAPFGGPTSSGMLTLHCPPAQIYSLGSFLRAHGAETVSVASLDYVLDRENPLFARLEAFLRS</sequence>
<proteinExistence type="inferred from homology"/>
<reference key="1">
    <citation type="journal article" date="2007" name="Science">
        <title>Legumes symbioses: absence of nod genes in photosynthetic bradyrhizobia.</title>
        <authorList>
            <person name="Giraud E."/>
            <person name="Moulin L."/>
            <person name="Vallenet D."/>
            <person name="Barbe V."/>
            <person name="Cytryn E."/>
            <person name="Avarre J.-C."/>
            <person name="Jaubert M."/>
            <person name="Simon D."/>
            <person name="Cartieaux F."/>
            <person name="Prin Y."/>
            <person name="Bena G."/>
            <person name="Hannibal L."/>
            <person name="Fardoux J."/>
            <person name="Kojadinovic M."/>
            <person name="Vuillet L."/>
            <person name="Lajus A."/>
            <person name="Cruveiller S."/>
            <person name="Rouy Z."/>
            <person name="Mangenot S."/>
            <person name="Segurens B."/>
            <person name="Dossat C."/>
            <person name="Franck W.L."/>
            <person name="Chang W.-S."/>
            <person name="Saunders E."/>
            <person name="Bruce D."/>
            <person name="Richardson P."/>
            <person name="Normand P."/>
            <person name="Dreyfus B."/>
            <person name="Pignol D."/>
            <person name="Stacey G."/>
            <person name="Emerich D."/>
            <person name="Vermeglio A."/>
            <person name="Medigue C."/>
            <person name="Sadowsky M."/>
        </authorList>
    </citation>
    <scope>NUCLEOTIDE SEQUENCE [LARGE SCALE GENOMIC DNA]</scope>
    <source>
        <strain>ORS 278</strain>
    </source>
</reference>
<accession>A4Z0T3</accession>
<gene>
    <name evidence="1" type="primary">hisG</name>
    <name type="ordered locus">BRADO6107</name>
</gene>
<dbReference type="EC" id="2.4.2.17" evidence="1"/>
<dbReference type="EMBL" id="CU234118">
    <property type="protein sequence ID" value="CAL79759.1"/>
    <property type="molecule type" value="Genomic_DNA"/>
</dbReference>
<dbReference type="RefSeq" id="WP_012029649.1">
    <property type="nucleotide sequence ID" value="NC_009445.1"/>
</dbReference>
<dbReference type="SMR" id="A4Z0T3"/>
<dbReference type="STRING" id="114615.BRADO6107"/>
<dbReference type="KEGG" id="bra:BRADO6107"/>
<dbReference type="eggNOG" id="COG0040">
    <property type="taxonomic scope" value="Bacteria"/>
</dbReference>
<dbReference type="HOGENOM" id="CLU_038115_0_1_5"/>
<dbReference type="OrthoDB" id="9806435at2"/>
<dbReference type="UniPathway" id="UPA00031">
    <property type="reaction ID" value="UER00006"/>
</dbReference>
<dbReference type="Proteomes" id="UP000001994">
    <property type="component" value="Chromosome"/>
</dbReference>
<dbReference type="GO" id="GO:0005737">
    <property type="term" value="C:cytoplasm"/>
    <property type="evidence" value="ECO:0007669"/>
    <property type="project" value="UniProtKB-SubCell"/>
</dbReference>
<dbReference type="GO" id="GO:0005524">
    <property type="term" value="F:ATP binding"/>
    <property type="evidence" value="ECO:0007669"/>
    <property type="project" value="UniProtKB-KW"/>
</dbReference>
<dbReference type="GO" id="GO:0003879">
    <property type="term" value="F:ATP phosphoribosyltransferase activity"/>
    <property type="evidence" value="ECO:0007669"/>
    <property type="project" value="UniProtKB-UniRule"/>
</dbReference>
<dbReference type="GO" id="GO:0000287">
    <property type="term" value="F:magnesium ion binding"/>
    <property type="evidence" value="ECO:0007669"/>
    <property type="project" value="UniProtKB-UniRule"/>
</dbReference>
<dbReference type="GO" id="GO:0000105">
    <property type="term" value="P:L-histidine biosynthetic process"/>
    <property type="evidence" value="ECO:0007669"/>
    <property type="project" value="UniProtKB-UniRule"/>
</dbReference>
<dbReference type="CDD" id="cd13593">
    <property type="entry name" value="PBP2_HisGL3"/>
    <property type="match status" value="1"/>
</dbReference>
<dbReference type="Gene3D" id="3.40.190.10">
    <property type="entry name" value="Periplasmic binding protein-like II"/>
    <property type="match status" value="2"/>
</dbReference>
<dbReference type="HAMAP" id="MF_00079">
    <property type="entry name" value="HisG_Long"/>
    <property type="match status" value="1"/>
</dbReference>
<dbReference type="InterPro" id="IPR020621">
    <property type="entry name" value="ATP-PRT_HisG_long"/>
</dbReference>
<dbReference type="InterPro" id="IPR013820">
    <property type="entry name" value="ATP_PRibTrfase_cat"/>
</dbReference>
<dbReference type="InterPro" id="IPR018198">
    <property type="entry name" value="ATP_PRibTrfase_CS"/>
</dbReference>
<dbReference type="InterPro" id="IPR001348">
    <property type="entry name" value="ATP_PRibTrfase_HisG"/>
</dbReference>
<dbReference type="NCBIfam" id="TIGR00070">
    <property type="entry name" value="hisG"/>
    <property type="match status" value="1"/>
</dbReference>
<dbReference type="PANTHER" id="PTHR21403:SF8">
    <property type="entry name" value="ATP PHOSPHORIBOSYLTRANSFERASE"/>
    <property type="match status" value="1"/>
</dbReference>
<dbReference type="PANTHER" id="PTHR21403">
    <property type="entry name" value="ATP PHOSPHORIBOSYLTRANSFERASE ATP-PRTASE"/>
    <property type="match status" value="1"/>
</dbReference>
<dbReference type="Pfam" id="PF01634">
    <property type="entry name" value="HisG"/>
    <property type="match status" value="1"/>
</dbReference>
<dbReference type="SUPFAM" id="SSF53850">
    <property type="entry name" value="Periplasmic binding protein-like II"/>
    <property type="match status" value="1"/>
</dbReference>
<dbReference type="PROSITE" id="PS01316">
    <property type="entry name" value="ATP_P_PHORIBOSYLTR"/>
    <property type="match status" value="1"/>
</dbReference>
<keyword id="KW-0028">Amino-acid biosynthesis</keyword>
<keyword id="KW-0067">ATP-binding</keyword>
<keyword id="KW-0963">Cytoplasm</keyword>
<keyword id="KW-0328">Glycosyltransferase</keyword>
<keyword id="KW-0368">Histidine biosynthesis</keyword>
<keyword id="KW-0460">Magnesium</keyword>
<keyword id="KW-0479">Metal-binding</keyword>
<keyword id="KW-0547">Nucleotide-binding</keyword>
<keyword id="KW-1185">Reference proteome</keyword>
<keyword id="KW-0808">Transferase</keyword>
<protein>
    <recommendedName>
        <fullName evidence="1">ATP phosphoribosyltransferase</fullName>
        <shortName evidence="1">ATP-PRT</shortName>
        <shortName evidence="1">ATP-PRTase</shortName>
        <ecNumber evidence="1">2.4.2.17</ecNumber>
    </recommendedName>
</protein>
<organism>
    <name type="scientific">Bradyrhizobium sp. (strain ORS 278)</name>
    <dbReference type="NCBI Taxonomy" id="114615"/>
    <lineage>
        <taxon>Bacteria</taxon>
        <taxon>Pseudomonadati</taxon>
        <taxon>Pseudomonadota</taxon>
        <taxon>Alphaproteobacteria</taxon>
        <taxon>Hyphomicrobiales</taxon>
        <taxon>Nitrobacteraceae</taxon>
        <taxon>Bradyrhizobium</taxon>
    </lineage>
</organism>
<evidence type="ECO:0000255" key="1">
    <source>
        <dbReference type="HAMAP-Rule" id="MF_00079"/>
    </source>
</evidence>
<name>HIS1_BRASO</name>
<feature type="chain" id="PRO_1000004449" description="ATP phosphoribosyltransferase">
    <location>
        <begin position="1"/>
        <end position="325"/>
    </location>
</feature>
<comment type="function">
    <text evidence="1">Catalyzes the condensation of ATP and 5-phosphoribose 1-diphosphate to form N'-(5'-phosphoribosyl)-ATP (PR-ATP). Has a crucial role in the pathway because the rate of histidine biosynthesis seems to be controlled primarily by regulation of HisG enzymatic activity.</text>
</comment>
<comment type="catalytic activity">
    <reaction evidence="1">
        <text>1-(5-phospho-beta-D-ribosyl)-ATP + diphosphate = 5-phospho-alpha-D-ribose 1-diphosphate + ATP</text>
        <dbReference type="Rhea" id="RHEA:18473"/>
        <dbReference type="ChEBI" id="CHEBI:30616"/>
        <dbReference type="ChEBI" id="CHEBI:33019"/>
        <dbReference type="ChEBI" id="CHEBI:58017"/>
        <dbReference type="ChEBI" id="CHEBI:73183"/>
        <dbReference type="EC" id="2.4.2.17"/>
    </reaction>
</comment>
<comment type="cofactor">
    <cofactor evidence="1">
        <name>Mg(2+)</name>
        <dbReference type="ChEBI" id="CHEBI:18420"/>
    </cofactor>
</comment>
<comment type="activity regulation">
    <text evidence="1">Feedback inhibited by histidine.</text>
</comment>
<comment type="pathway">
    <text evidence="1">Amino-acid biosynthesis; L-histidine biosynthesis; L-histidine from 5-phospho-alpha-D-ribose 1-diphosphate: step 1/9.</text>
</comment>
<comment type="subcellular location">
    <subcellularLocation>
        <location evidence="1">Cytoplasm</location>
    </subcellularLocation>
</comment>
<comment type="similarity">
    <text evidence="1">Belongs to the ATP phosphoribosyltransferase family. Long subfamily.</text>
</comment>